<gene>
    <name type="primary">rps15-A</name>
</gene>
<gene>
    <name type="primary">rps15-B</name>
</gene>
<feature type="chain" id="PRO_0000276978" description="Small ribosomal subunit protein uS15c">
    <location>
        <begin position="1"/>
        <end position="78"/>
    </location>
</feature>
<dbReference type="EMBL" id="EF115542">
    <property type="protein sequence ID" value="ABK79542.1"/>
    <property type="molecule type" value="Genomic_DNA"/>
</dbReference>
<dbReference type="EMBL" id="EF115542">
    <property type="protein sequence ID" value="ABK79553.1"/>
    <property type="molecule type" value="Genomic_DNA"/>
</dbReference>
<dbReference type="SMR" id="A1E9X0"/>
<dbReference type="FunCoup" id="A1E9X0">
    <property type="interactions" value="193"/>
</dbReference>
<dbReference type="STRING" id="4558.A1E9X0"/>
<dbReference type="KEGG" id="sbi:4549147"/>
<dbReference type="KEGG" id="sbi:4549204"/>
<dbReference type="eggNOG" id="KOG2815">
    <property type="taxonomic scope" value="Eukaryota"/>
</dbReference>
<dbReference type="InParanoid" id="A1E9X0"/>
<dbReference type="OrthoDB" id="364880at2759"/>
<dbReference type="Proteomes" id="UP000000768">
    <property type="component" value="Chloroplast"/>
</dbReference>
<dbReference type="ExpressionAtlas" id="A1E9X0">
    <property type="expression patterns" value="baseline"/>
</dbReference>
<dbReference type="GO" id="GO:0009507">
    <property type="term" value="C:chloroplast"/>
    <property type="evidence" value="ECO:0007669"/>
    <property type="project" value="UniProtKB-SubCell"/>
</dbReference>
<dbReference type="GO" id="GO:1990904">
    <property type="term" value="C:ribonucleoprotein complex"/>
    <property type="evidence" value="ECO:0007669"/>
    <property type="project" value="UniProtKB-KW"/>
</dbReference>
<dbReference type="GO" id="GO:0005840">
    <property type="term" value="C:ribosome"/>
    <property type="evidence" value="ECO:0007669"/>
    <property type="project" value="UniProtKB-KW"/>
</dbReference>
<dbReference type="GO" id="GO:0003735">
    <property type="term" value="F:structural constituent of ribosome"/>
    <property type="evidence" value="ECO:0007669"/>
    <property type="project" value="InterPro"/>
</dbReference>
<dbReference type="GO" id="GO:0006412">
    <property type="term" value="P:translation"/>
    <property type="evidence" value="ECO:0007669"/>
    <property type="project" value="UniProtKB-UniRule"/>
</dbReference>
<dbReference type="CDD" id="cd00353">
    <property type="entry name" value="Ribosomal_S15p_S13e"/>
    <property type="match status" value="1"/>
</dbReference>
<dbReference type="Gene3D" id="1.10.287.10">
    <property type="entry name" value="S15/NS1, RNA-binding"/>
    <property type="match status" value="1"/>
</dbReference>
<dbReference type="HAMAP" id="MF_01343_B">
    <property type="entry name" value="Ribosomal_uS15_B"/>
    <property type="match status" value="1"/>
</dbReference>
<dbReference type="InterPro" id="IPR000589">
    <property type="entry name" value="Ribosomal_uS15"/>
</dbReference>
<dbReference type="InterPro" id="IPR005290">
    <property type="entry name" value="Ribosomal_uS15_bac-type"/>
</dbReference>
<dbReference type="InterPro" id="IPR009068">
    <property type="entry name" value="uS15_NS1_RNA-bd_sf"/>
</dbReference>
<dbReference type="NCBIfam" id="TIGR00952">
    <property type="entry name" value="S15_bact"/>
    <property type="match status" value="1"/>
</dbReference>
<dbReference type="PANTHER" id="PTHR23321">
    <property type="entry name" value="RIBOSOMAL PROTEIN S15, BACTERIAL AND ORGANELLAR"/>
    <property type="match status" value="1"/>
</dbReference>
<dbReference type="PANTHER" id="PTHR23321:SF26">
    <property type="entry name" value="SMALL RIBOSOMAL SUBUNIT PROTEIN US15M"/>
    <property type="match status" value="1"/>
</dbReference>
<dbReference type="Pfam" id="PF00312">
    <property type="entry name" value="Ribosomal_S15"/>
    <property type="match status" value="1"/>
</dbReference>
<dbReference type="SMART" id="SM01387">
    <property type="entry name" value="Ribosomal_S15"/>
    <property type="match status" value="1"/>
</dbReference>
<dbReference type="SUPFAM" id="SSF47060">
    <property type="entry name" value="S15/NS1 RNA-binding domain"/>
    <property type="match status" value="1"/>
</dbReference>
<dbReference type="PROSITE" id="PS00362">
    <property type="entry name" value="RIBOSOMAL_S15"/>
    <property type="match status" value="1"/>
</dbReference>
<evidence type="ECO:0000250" key="1"/>
<evidence type="ECO:0000305" key="2"/>
<reference key="1">
    <citation type="journal article" date="2007" name="Theor. Appl. Genet.">
        <title>Complete chloroplast genome sequences of Hordeum vulgare, Sorghum bicolor and Agrostis stolonifera, and comparative analyses with other grass genomes.</title>
        <authorList>
            <person name="Saski C."/>
            <person name="Lee S.-B."/>
            <person name="Fjellheim S."/>
            <person name="Guda C."/>
            <person name="Jansen R.K."/>
            <person name="Luo H."/>
            <person name="Tomkins J."/>
            <person name="Rognli O.A."/>
            <person name="Daniell H."/>
            <person name="Clarke J.L."/>
        </authorList>
    </citation>
    <scope>NUCLEOTIDE SEQUENCE [LARGE SCALE GENOMIC DNA]</scope>
    <source>
        <strain>cv. BTx623</strain>
    </source>
</reference>
<accession>A1E9X0</accession>
<keyword id="KW-0150">Chloroplast</keyword>
<keyword id="KW-0934">Plastid</keyword>
<keyword id="KW-1185">Reference proteome</keyword>
<keyword id="KW-0687">Ribonucleoprotein</keyword>
<keyword id="KW-0689">Ribosomal protein</keyword>
<sequence length="78" mass="9444">MVKEEKQENRGSVEFQVFSFTNKIRRLASHLELHKKDFSSERGLRRLLGKRQRLLAYLAKKNRVRYKKLISQLDIREK</sequence>
<organism>
    <name type="scientific">Sorghum bicolor</name>
    <name type="common">Sorghum</name>
    <name type="synonym">Sorghum vulgare</name>
    <dbReference type="NCBI Taxonomy" id="4558"/>
    <lineage>
        <taxon>Eukaryota</taxon>
        <taxon>Viridiplantae</taxon>
        <taxon>Streptophyta</taxon>
        <taxon>Embryophyta</taxon>
        <taxon>Tracheophyta</taxon>
        <taxon>Spermatophyta</taxon>
        <taxon>Magnoliopsida</taxon>
        <taxon>Liliopsida</taxon>
        <taxon>Poales</taxon>
        <taxon>Poaceae</taxon>
        <taxon>PACMAD clade</taxon>
        <taxon>Panicoideae</taxon>
        <taxon>Andropogonodae</taxon>
        <taxon>Andropogoneae</taxon>
        <taxon>Sorghinae</taxon>
        <taxon>Sorghum</taxon>
    </lineage>
</organism>
<name>RR15_SORBI</name>
<proteinExistence type="inferred from homology"/>
<protein>
    <recommendedName>
        <fullName evidence="2">Small ribosomal subunit protein uS15c</fullName>
    </recommendedName>
    <alternativeName>
        <fullName>30S ribosomal protein S15, chloroplastic</fullName>
    </alternativeName>
</protein>
<geneLocation type="chloroplast"/>
<comment type="subunit">
    <text evidence="1">Part of the 30S ribosomal subunit.</text>
</comment>
<comment type="subcellular location">
    <subcellularLocation>
        <location>Plastid</location>
        <location>Chloroplast</location>
    </subcellularLocation>
</comment>
<comment type="similarity">
    <text evidence="2">Belongs to the universal ribosomal protein uS15 family.</text>
</comment>